<organism>
    <name type="scientific">Staphylococcus epidermidis (strain ATCC 35984 / DSM 28319 / BCRC 17069 / CCUG 31568 / BM 3577 / RP62A)</name>
    <dbReference type="NCBI Taxonomy" id="176279"/>
    <lineage>
        <taxon>Bacteria</taxon>
        <taxon>Bacillati</taxon>
        <taxon>Bacillota</taxon>
        <taxon>Bacilli</taxon>
        <taxon>Bacillales</taxon>
        <taxon>Staphylococcaceae</taxon>
        <taxon>Staphylococcus</taxon>
    </lineage>
</organism>
<evidence type="ECO:0000250" key="1"/>
<evidence type="ECO:0000305" key="2"/>
<reference key="1">
    <citation type="journal article" date="2005" name="J. Bacteriol.">
        <title>Insights on evolution of virulence and resistance from the complete genome analysis of an early methicillin-resistant Staphylococcus aureus strain and a biofilm-producing methicillin-resistant Staphylococcus epidermidis strain.</title>
        <authorList>
            <person name="Gill S.R."/>
            <person name="Fouts D.E."/>
            <person name="Archer G.L."/>
            <person name="Mongodin E.F."/>
            <person name="DeBoy R.T."/>
            <person name="Ravel J."/>
            <person name="Paulsen I.T."/>
            <person name="Kolonay J.F."/>
            <person name="Brinkac L.M."/>
            <person name="Beanan M.J."/>
            <person name="Dodson R.J."/>
            <person name="Daugherty S.C."/>
            <person name="Madupu R."/>
            <person name="Angiuoli S.V."/>
            <person name="Durkin A.S."/>
            <person name="Haft D.H."/>
            <person name="Vamathevan J.J."/>
            <person name="Khouri H."/>
            <person name="Utterback T.R."/>
            <person name="Lee C."/>
            <person name="Dimitrov G."/>
            <person name="Jiang L."/>
            <person name="Qin H."/>
            <person name="Weidman J."/>
            <person name="Tran K."/>
            <person name="Kang K.H."/>
            <person name="Hance I.R."/>
            <person name="Nelson K.E."/>
            <person name="Fraser C.M."/>
        </authorList>
    </citation>
    <scope>NUCLEOTIDE SEQUENCE [LARGE SCALE GENOMIC DNA]</scope>
    <source>
        <strain>ATCC 35984 / DSM 28319 / BCRC 17069 / CCUG 31568 / BM 3577 / RP62A</strain>
    </source>
</reference>
<keyword id="KW-0501">Molybdenum cofactor biosynthesis</keyword>
<keyword id="KW-1185">Reference proteome</keyword>
<comment type="function">
    <text evidence="1">May be involved in the biosynthesis of molybdopterin.</text>
</comment>
<comment type="pathway">
    <text>Cofactor biosynthesis; molybdopterin biosynthesis.</text>
</comment>
<comment type="similarity">
    <text evidence="2">Belongs to the MoaB/Mog family.</text>
</comment>
<feature type="chain" id="PRO_0000170980" description="Molybdenum cofactor biosynthesis protein B">
    <location>
        <begin position="1"/>
        <end position="176"/>
    </location>
</feature>
<proteinExistence type="inferred from homology"/>
<name>MOAB_STAEQ</name>
<protein>
    <recommendedName>
        <fullName>Molybdenum cofactor biosynthesis protein B</fullName>
    </recommendedName>
</protein>
<sequence length="176" mass="19796">MHKHQHQNIHLNRPIHVAILTVSDTRDYDSDKGGQLIQSLINQHENHVDINHYRIVKDDIEAITHQLKLWLTSSNQLDVIITTGGTGISQRDVTIEAVRPLLTKELEGFGELFRYLSYTEDVGTRALLTRAIAGTCDSTLIFALPGSTGAIKLAIEKLIKPELSHLVFELNKDIRN</sequence>
<gene>
    <name type="primary">moaB</name>
    <name type="ordered locus">SERP1857</name>
</gene>
<dbReference type="EMBL" id="CP000029">
    <property type="protein sequence ID" value="AAW55217.1"/>
    <property type="molecule type" value="Genomic_DNA"/>
</dbReference>
<dbReference type="RefSeq" id="WP_002438508.1">
    <property type="nucleotide sequence ID" value="NC_002976.3"/>
</dbReference>
<dbReference type="SMR" id="Q5HLX4"/>
<dbReference type="STRING" id="176279.SERP1857"/>
<dbReference type="KEGG" id="ser:SERP1857"/>
<dbReference type="eggNOG" id="COG0521">
    <property type="taxonomic scope" value="Bacteria"/>
</dbReference>
<dbReference type="HOGENOM" id="CLU_077358_2_3_9"/>
<dbReference type="UniPathway" id="UPA00344"/>
<dbReference type="Proteomes" id="UP000000531">
    <property type="component" value="Chromosome"/>
</dbReference>
<dbReference type="GO" id="GO:0005829">
    <property type="term" value="C:cytosol"/>
    <property type="evidence" value="ECO:0007669"/>
    <property type="project" value="TreeGrafter"/>
</dbReference>
<dbReference type="GO" id="GO:0006777">
    <property type="term" value="P:Mo-molybdopterin cofactor biosynthetic process"/>
    <property type="evidence" value="ECO:0007669"/>
    <property type="project" value="UniProtKB-KW"/>
</dbReference>
<dbReference type="CDD" id="cd00886">
    <property type="entry name" value="MogA_MoaB"/>
    <property type="match status" value="1"/>
</dbReference>
<dbReference type="FunFam" id="3.40.980.10:FF:000006">
    <property type="entry name" value="Molybdenum cofactor biosynthesis protein B"/>
    <property type="match status" value="1"/>
</dbReference>
<dbReference type="Gene3D" id="3.40.980.10">
    <property type="entry name" value="MoaB/Mog-like domain"/>
    <property type="match status" value="1"/>
</dbReference>
<dbReference type="InterPro" id="IPR012245">
    <property type="entry name" value="MoaB"/>
</dbReference>
<dbReference type="InterPro" id="IPR036425">
    <property type="entry name" value="MoaB/Mog-like_dom_sf"/>
</dbReference>
<dbReference type="InterPro" id="IPR001453">
    <property type="entry name" value="MoaB/Mog_dom"/>
</dbReference>
<dbReference type="InterPro" id="IPR008284">
    <property type="entry name" value="MoCF_biosynth_CS"/>
</dbReference>
<dbReference type="NCBIfam" id="TIGR00177">
    <property type="entry name" value="molyb_syn"/>
    <property type="match status" value="1"/>
</dbReference>
<dbReference type="PANTHER" id="PTHR43232">
    <property type="entry name" value="MOLYBDENUM COFACTOR BIOSYNTHESIS PROTEIN B"/>
    <property type="match status" value="1"/>
</dbReference>
<dbReference type="PANTHER" id="PTHR43232:SF2">
    <property type="entry name" value="MOLYBDENUM COFACTOR BIOSYNTHESIS PROTEIN B"/>
    <property type="match status" value="1"/>
</dbReference>
<dbReference type="Pfam" id="PF00994">
    <property type="entry name" value="MoCF_biosynth"/>
    <property type="match status" value="1"/>
</dbReference>
<dbReference type="PIRSF" id="PIRSF006443">
    <property type="entry name" value="MoaB"/>
    <property type="match status" value="1"/>
</dbReference>
<dbReference type="SMART" id="SM00852">
    <property type="entry name" value="MoCF_biosynth"/>
    <property type="match status" value="1"/>
</dbReference>
<dbReference type="SUPFAM" id="SSF53218">
    <property type="entry name" value="Molybdenum cofactor biosynthesis proteins"/>
    <property type="match status" value="1"/>
</dbReference>
<dbReference type="PROSITE" id="PS01078">
    <property type="entry name" value="MOCF_BIOSYNTHESIS_1"/>
    <property type="match status" value="1"/>
</dbReference>
<accession>Q5HLX4</accession>